<name>MTND_AQUAE</name>
<reference key="1">
    <citation type="journal article" date="1998" name="Nature">
        <title>The complete genome of the hyperthermophilic bacterium Aquifex aeolicus.</title>
        <authorList>
            <person name="Deckert G."/>
            <person name="Warren P.V."/>
            <person name="Gaasterland T."/>
            <person name="Young W.G."/>
            <person name="Lenox A.L."/>
            <person name="Graham D.E."/>
            <person name="Overbeek R."/>
            <person name="Snead M.A."/>
            <person name="Keller M."/>
            <person name="Aujay M."/>
            <person name="Huber R."/>
            <person name="Feldman R.A."/>
            <person name="Short J.M."/>
            <person name="Olsen G.J."/>
            <person name="Swanson R.V."/>
        </authorList>
    </citation>
    <scope>NUCLEOTIDE SEQUENCE [LARGE SCALE GENOMIC DNA]</scope>
    <source>
        <strain>VF5</strain>
    </source>
</reference>
<evidence type="ECO:0000255" key="1">
    <source>
        <dbReference type="HAMAP-Rule" id="MF_01682"/>
    </source>
</evidence>
<accession>O67785</accession>
<organism>
    <name type="scientific">Aquifex aeolicus (strain VF5)</name>
    <dbReference type="NCBI Taxonomy" id="224324"/>
    <lineage>
        <taxon>Bacteria</taxon>
        <taxon>Pseudomonadati</taxon>
        <taxon>Aquificota</taxon>
        <taxon>Aquificia</taxon>
        <taxon>Aquificales</taxon>
        <taxon>Aquificaceae</taxon>
        <taxon>Aquifex</taxon>
    </lineage>
</organism>
<dbReference type="EC" id="1.13.11.54" evidence="1"/>
<dbReference type="EC" id="1.13.11.53" evidence="1"/>
<dbReference type="EMBL" id="AE000657">
    <property type="protein sequence ID" value="AAC07759.1"/>
    <property type="molecule type" value="Genomic_DNA"/>
</dbReference>
<dbReference type="PIR" id="E70469">
    <property type="entry name" value="E70469"/>
</dbReference>
<dbReference type="RefSeq" id="NP_214354.1">
    <property type="nucleotide sequence ID" value="NC_000918.1"/>
</dbReference>
<dbReference type="RefSeq" id="WP_010881290.1">
    <property type="nucleotide sequence ID" value="NC_000918.1"/>
</dbReference>
<dbReference type="SMR" id="O67785"/>
<dbReference type="STRING" id="224324.aq_1975"/>
<dbReference type="EnsemblBacteria" id="AAC07759">
    <property type="protein sequence ID" value="AAC07759"/>
    <property type="gene ID" value="aq_1975"/>
</dbReference>
<dbReference type="KEGG" id="aae:aq_1975"/>
<dbReference type="PATRIC" id="fig|224324.8.peg.1525"/>
<dbReference type="eggNOG" id="COG1791">
    <property type="taxonomic scope" value="Bacteria"/>
</dbReference>
<dbReference type="HOGENOM" id="CLU_125400_0_0_0"/>
<dbReference type="InParanoid" id="O67785"/>
<dbReference type="OrthoDB" id="9795636at2"/>
<dbReference type="UniPathway" id="UPA00904">
    <property type="reaction ID" value="UER00878"/>
</dbReference>
<dbReference type="Proteomes" id="UP000000798">
    <property type="component" value="Chromosome"/>
</dbReference>
<dbReference type="GO" id="GO:0010308">
    <property type="term" value="F:acireductone dioxygenase (Ni2+-requiring) activity"/>
    <property type="evidence" value="ECO:0007669"/>
    <property type="project" value="UniProtKB-UniRule"/>
</dbReference>
<dbReference type="GO" id="GO:0010309">
    <property type="term" value="F:acireductone dioxygenase [iron(II)-requiring] activity"/>
    <property type="evidence" value="ECO:0000318"/>
    <property type="project" value="GO_Central"/>
</dbReference>
<dbReference type="GO" id="GO:0005506">
    <property type="term" value="F:iron ion binding"/>
    <property type="evidence" value="ECO:0007669"/>
    <property type="project" value="UniProtKB-UniRule"/>
</dbReference>
<dbReference type="GO" id="GO:0016151">
    <property type="term" value="F:nickel cation binding"/>
    <property type="evidence" value="ECO:0007669"/>
    <property type="project" value="UniProtKB-UniRule"/>
</dbReference>
<dbReference type="GO" id="GO:0019509">
    <property type="term" value="P:L-methionine salvage from methylthioadenosine"/>
    <property type="evidence" value="ECO:0007669"/>
    <property type="project" value="UniProtKB-UniRule"/>
</dbReference>
<dbReference type="GO" id="GO:0019284">
    <property type="term" value="P:L-methionine salvage from S-adenosylmethionine"/>
    <property type="evidence" value="ECO:0007669"/>
    <property type="project" value="InterPro"/>
</dbReference>
<dbReference type="GO" id="GO:0006555">
    <property type="term" value="P:methionine metabolic process"/>
    <property type="evidence" value="ECO:0000318"/>
    <property type="project" value="GO_Central"/>
</dbReference>
<dbReference type="CDD" id="cd02232">
    <property type="entry name" value="cupin_ARD"/>
    <property type="match status" value="1"/>
</dbReference>
<dbReference type="FunFam" id="2.60.120.10:FF:000056">
    <property type="entry name" value="Acireductone dioxygenase"/>
    <property type="match status" value="1"/>
</dbReference>
<dbReference type="Gene3D" id="2.60.120.10">
    <property type="entry name" value="Jelly Rolls"/>
    <property type="match status" value="1"/>
</dbReference>
<dbReference type="HAMAP" id="MF_01682">
    <property type="entry name" value="Salvage_MtnD"/>
    <property type="match status" value="1"/>
</dbReference>
<dbReference type="InterPro" id="IPR004313">
    <property type="entry name" value="ARD"/>
</dbReference>
<dbReference type="InterPro" id="IPR023956">
    <property type="entry name" value="ARD_bac"/>
</dbReference>
<dbReference type="InterPro" id="IPR014710">
    <property type="entry name" value="RmlC-like_jellyroll"/>
</dbReference>
<dbReference type="InterPro" id="IPR011051">
    <property type="entry name" value="RmlC_Cupin_sf"/>
</dbReference>
<dbReference type="PANTHER" id="PTHR23418">
    <property type="entry name" value="ACIREDUCTONE DIOXYGENASE"/>
    <property type="match status" value="1"/>
</dbReference>
<dbReference type="PANTHER" id="PTHR23418:SF0">
    <property type="entry name" value="ACIREDUCTONE DIOXYGENASE"/>
    <property type="match status" value="1"/>
</dbReference>
<dbReference type="Pfam" id="PF03079">
    <property type="entry name" value="ARD"/>
    <property type="match status" value="1"/>
</dbReference>
<dbReference type="SUPFAM" id="SSF51182">
    <property type="entry name" value="RmlC-like cupins"/>
    <property type="match status" value="1"/>
</dbReference>
<feature type="chain" id="PRO_0000359172" description="Acireductone dioxygenase">
    <location>
        <begin position="1"/>
        <end position="183"/>
    </location>
</feature>
<feature type="binding site" evidence="1">
    <location>
        <position position="95"/>
    </location>
    <ligand>
        <name>Fe(2+)</name>
        <dbReference type="ChEBI" id="CHEBI:29033"/>
    </ligand>
</feature>
<feature type="binding site" evidence="1">
    <location>
        <position position="95"/>
    </location>
    <ligand>
        <name>Ni(2+)</name>
        <dbReference type="ChEBI" id="CHEBI:49786"/>
    </ligand>
</feature>
<feature type="binding site" evidence="1">
    <location>
        <position position="97"/>
    </location>
    <ligand>
        <name>Fe(2+)</name>
        <dbReference type="ChEBI" id="CHEBI:29033"/>
    </ligand>
</feature>
<feature type="binding site" evidence="1">
    <location>
        <position position="97"/>
    </location>
    <ligand>
        <name>Ni(2+)</name>
        <dbReference type="ChEBI" id="CHEBI:49786"/>
    </ligand>
</feature>
<feature type="binding site" evidence="1">
    <location>
        <position position="101"/>
    </location>
    <ligand>
        <name>Fe(2+)</name>
        <dbReference type="ChEBI" id="CHEBI:29033"/>
    </ligand>
</feature>
<feature type="binding site" evidence="1">
    <location>
        <position position="101"/>
    </location>
    <ligand>
        <name>Ni(2+)</name>
        <dbReference type="ChEBI" id="CHEBI:49786"/>
    </ligand>
</feature>
<feature type="binding site" evidence="1">
    <location>
        <position position="139"/>
    </location>
    <ligand>
        <name>Fe(2+)</name>
        <dbReference type="ChEBI" id="CHEBI:29033"/>
    </ligand>
</feature>
<feature type="binding site" evidence="1">
    <location>
        <position position="139"/>
    </location>
    <ligand>
        <name>Ni(2+)</name>
        <dbReference type="ChEBI" id="CHEBI:49786"/>
    </ligand>
</feature>
<feature type="site" description="May play a role in metal incorporation in vivo" evidence="1">
    <location>
        <position position="94"/>
    </location>
</feature>
<feature type="site" description="Important to generate the dianion" evidence="1">
    <location>
        <position position="103"/>
    </location>
</feature>
<comment type="function">
    <text evidence="1">Catalyzes 2 different reactions between oxygen and the acireductone 1,2-dihydroxy-3-keto-5-methylthiopentene (DHK-MTPene) depending upon the metal bound in the active site. Fe-containing acireductone dioxygenase (Fe-ARD) produces formate and 2-keto-4-methylthiobutyrate (KMTB), the alpha-ketoacid precursor of methionine in the methionine recycle pathway. Ni-containing acireductone dioxygenase (Ni-ARD) produces methylthiopropionate, carbon monoxide and formate, and does not lie on the methionine recycle pathway.</text>
</comment>
<comment type="catalytic activity">
    <reaction evidence="1">
        <text>1,2-dihydroxy-5-(methylsulfanyl)pent-1-en-3-one + O2 = 3-(methylsulfanyl)propanoate + CO + formate + 2 H(+)</text>
        <dbReference type="Rhea" id="RHEA:14161"/>
        <dbReference type="ChEBI" id="CHEBI:15378"/>
        <dbReference type="ChEBI" id="CHEBI:15379"/>
        <dbReference type="ChEBI" id="CHEBI:15740"/>
        <dbReference type="ChEBI" id="CHEBI:17245"/>
        <dbReference type="ChEBI" id="CHEBI:49016"/>
        <dbReference type="ChEBI" id="CHEBI:49252"/>
        <dbReference type="EC" id="1.13.11.53"/>
    </reaction>
</comment>
<comment type="catalytic activity">
    <reaction evidence="1">
        <text>1,2-dihydroxy-5-(methylsulfanyl)pent-1-en-3-one + O2 = 4-methylsulfanyl-2-oxobutanoate + formate + 2 H(+)</text>
        <dbReference type="Rhea" id="RHEA:24504"/>
        <dbReference type="ChEBI" id="CHEBI:15378"/>
        <dbReference type="ChEBI" id="CHEBI:15379"/>
        <dbReference type="ChEBI" id="CHEBI:15740"/>
        <dbReference type="ChEBI" id="CHEBI:16723"/>
        <dbReference type="ChEBI" id="CHEBI:49252"/>
        <dbReference type="EC" id="1.13.11.54"/>
    </reaction>
</comment>
<comment type="cofactor">
    <cofactor evidence="1">
        <name>Fe(2+)</name>
        <dbReference type="ChEBI" id="CHEBI:29033"/>
    </cofactor>
    <text evidence="1">Binds 1 Fe(2+) cation per monomer.</text>
</comment>
<comment type="cofactor">
    <cofactor evidence="1">
        <name>Ni(2+)</name>
        <dbReference type="ChEBI" id="CHEBI:49786"/>
    </cofactor>
    <text evidence="1">Binds 1 nickel ion per monomer.</text>
</comment>
<comment type="pathway">
    <text evidence="1">Amino-acid biosynthesis; L-methionine biosynthesis via salvage pathway; L-methionine from S-methyl-5-thio-alpha-D-ribose 1-phosphate: step 5/6.</text>
</comment>
<comment type="subunit">
    <text evidence="1">Monomer.</text>
</comment>
<comment type="similarity">
    <text evidence="1">Belongs to the acireductone dioxygenase (ARD) family.</text>
</comment>
<gene>
    <name evidence="1" type="primary">mtnD</name>
    <name type="ordered locus">aq_1975</name>
</gene>
<protein>
    <recommendedName>
        <fullName evidence="1">Acireductone dioxygenase</fullName>
    </recommendedName>
    <alternativeName>
        <fullName evidence="1">1,2-dihydroxy-3-keto-5-methylthiopentene dioxygenase</fullName>
        <shortName evidence="1">DHK-MTPene dioxygenase</shortName>
    </alternativeName>
    <alternativeName>
        <fullName evidence="1">Acireductone dioxygenase (Fe(2+)-requiring)</fullName>
        <shortName evidence="1">ARD'</shortName>
        <shortName evidence="1">Fe-ARD</shortName>
        <ecNumber evidence="1">1.13.11.54</ecNumber>
    </alternativeName>
    <alternativeName>
        <fullName evidence="1">Acireductone dioxygenase (Ni(2+)-requiring)</fullName>
        <shortName evidence="1">ARD</shortName>
        <shortName evidence="1">Ni-ARD</shortName>
        <ecNumber evidence="1">1.13.11.53</ecNumber>
    </alternativeName>
</protein>
<keyword id="KW-0028">Amino-acid biosynthesis</keyword>
<keyword id="KW-0223">Dioxygenase</keyword>
<keyword id="KW-0408">Iron</keyword>
<keyword id="KW-0479">Metal-binding</keyword>
<keyword id="KW-0486">Methionine biosynthesis</keyword>
<keyword id="KW-0533">Nickel</keyword>
<keyword id="KW-0560">Oxidoreductase</keyword>
<keyword id="KW-1185">Reference proteome</keyword>
<proteinExistence type="inferred from homology"/>
<sequence length="183" mass="21478">MSRLRIYTESGELIKDITDPKEIAEELQKINVLFERWRANAPLKENASDEEIINAYKHEIDRLINKYGFQSYDVIAMTPEHPKKDELRQKFLKEHTHSDFEVRYFVYGDGVFYLHPNDKVYILHCTAGDLISVPPNTKHWFDMGENPNFKCIRLFTTPEGWVAEYTGSDIAEKFPKYEEVVNG</sequence>